<dbReference type="EMBL" id="AP009552">
    <property type="protein sequence ID" value="BAG03022.1"/>
    <property type="molecule type" value="Genomic_DNA"/>
</dbReference>
<dbReference type="RefSeq" id="WP_002732080.1">
    <property type="nucleotide sequence ID" value="NC_010296.1"/>
</dbReference>
<dbReference type="SMR" id="B0JLJ8"/>
<dbReference type="STRING" id="449447.MAE_32000"/>
<dbReference type="PaxDb" id="449447-MAE_32000"/>
<dbReference type="EnsemblBacteria" id="BAG03022">
    <property type="protein sequence ID" value="BAG03022"/>
    <property type="gene ID" value="MAE_32000"/>
</dbReference>
<dbReference type="GeneID" id="66707414"/>
<dbReference type="KEGG" id="mar:MAE_32000"/>
<dbReference type="eggNOG" id="COG0227">
    <property type="taxonomic scope" value="Bacteria"/>
</dbReference>
<dbReference type="HOGENOM" id="CLU_064548_3_0_3"/>
<dbReference type="BioCyc" id="MAER449447:MAE_RS13860-MONOMER"/>
<dbReference type="Proteomes" id="UP000001510">
    <property type="component" value="Chromosome"/>
</dbReference>
<dbReference type="GO" id="GO:1990904">
    <property type="term" value="C:ribonucleoprotein complex"/>
    <property type="evidence" value="ECO:0007669"/>
    <property type="project" value="UniProtKB-KW"/>
</dbReference>
<dbReference type="GO" id="GO:0005840">
    <property type="term" value="C:ribosome"/>
    <property type="evidence" value="ECO:0007669"/>
    <property type="project" value="UniProtKB-KW"/>
</dbReference>
<dbReference type="GO" id="GO:0003735">
    <property type="term" value="F:structural constituent of ribosome"/>
    <property type="evidence" value="ECO:0007669"/>
    <property type="project" value="InterPro"/>
</dbReference>
<dbReference type="GO" id="GO:0006412">
    <property type="term" value="P:translation"/>
    <property type="evidence" value="ECO:0007669"/>
    <property type="project" value="UniProtKB-UniRule"/>
</dbReference>
<dbReference type="Gene3D" id="2.30.170.40">
    <property type="entry name" value="Ribosomal protein L28/L24"/>
    <property type="match status" value="1"/>
</dbReference>
<dbReference type="HAMAP" id="MF_00373">
    <property type="entry name" value="Ribosomal_bL28"/>
    <property type="match status" value="1"/>
</dbReference>
<dbReference type="InterPro" id="IPR026569">
    <property type="entry name" value="Ribosomal_bL28"/>
</dbReference>
<dbReference type="InterPro" id="IPR034704">
    <property type="entry name" value="Ribosomal_bL28/bL31-like_sf"/>
</dbReference>
<dbReference type="InterPro" id="IPR001383">
    <property type="entry name" value="Ribosomal_bL28_bact-type"/>
</dbReference>
<dbReference type="InterPro" id="IPR037147">
    <property type="entry name" value="Ribosomal_bL28_sf"/>
</dbReference>
<dbReference type="NCBIfam" id="TIGR00009">
    <property type="entry name" value="L28"/>
    <property type="match status" value="1"/>
</dbReference>
<dbReference type="PANTHER" id="PTHR13528">
    <property type="entry name" value="39S RIBOSOMAL PROTEIN L28, MITOCHONDRIAL"/>
    <property type="match status" value="1"/>
</dbReference>
<dbReference type="PANTHER" id="PTHR13528:SF2">
    <property type="entry name" value="LARGE RIBOSOMAL SUBUNIT PROTEIN BL28M"/>
    <property type="match status" value="1"/>
</dbReference>
<dbReference type="Pfam" id="PF00830">
    <property type="entry name" value="Ribosomal_L28"/>
    <property type="match status" value="1"/>
</dbReference>
<dbReference type="SUPFAM" id="SSF143800">
    <property type="entry name" value="L28p-like"/>
    <property type="match status" value="1"/>
</dbReference>
<keyword id="KW-0687">Ribonucleoprotein</keyword>
<keyword id="KW-0689">Ribosomal protein</keyword>
<sequence>MSRVCTMTGKKANNAYAVSHSHRRTKKLQEANLQWKRVWWSEGNRWVKLRISTKAIKTIEKKGLAVFAREVGLNLNLY</sequence>
<gene>
    <name evidence="1" type="primary">rpmB</name>
    <name evidence="1" type="synonym">rpl28</name>
    <name type="ordered locus">MAE_32000</name>
</gene>
<organism>
    <name type="scientific">Microcystis aeruginosa (strain NIES-843 / IAM M-2473)</name>
    <dbReference type="NCBI Taxonomy" id="449447"/>
    <lineage>
        <taxon>Bacteria</taxon>
        <taxon>Bacillati</taxon>
        <taxon>Cyanobacteriota</taxon>
        <taxon>Cyanophyceae</taxon>
        <taxon>Oscillatoriophycideae</taxon>
        <taxon>Chroococcales</taxon>
        <taxon>Microcystaceae</taxon>
        <taxon>Microcystis</taxon>
    </lineage>
</organism>
<reference key="1">
    <citation type="journal article" date="2007" name="DNA Res.">
        <title>Complete genomic structure of the bloom-forming toxic cyanobacterium Microcystis aeruginosa NIES-843.</title>
        <authorList>
            <person name="Kaneko T."/>
            <person name="Nakajima N."/>
            <person name="Okamoto S."/>
            <person name="Suzuki I."/>
            <person name="Tanabe Y."/>
            <person name="Tamaoki M."/>
            <person name="Nakamura Y."/>
            <person name="Kasai F."/>
            <person name="Watanabe A."/>
            <person name="Kawashima K."/>
            <person name="Kishida Y."/>
            <person name="Ono A."/>
            <person name="Shimizu Y."/>
            <person name="Takahashi C."/>
            <person name="Minami C."/>
            <person name="Fujishiro T."/>
            <person name="Kohara M."/>
            <person name="Katoh M."/>
            <person name="Nakazaki N."/>
            <person name="Nakayama S."/>
            <person name="Yamada M."/>
            <person name="Tabata S."/>
            <person name="Watanabe M.M."/>
        </authorList>
    </citation>
    <scope>NUCLEOTIDE SEQUENCE [LARGE SCALE GENOMIC DNA]</scope>
    <source>
        <strain>NIES-843 / IAM M-247</strain>
    </source>
</reference>
<proteinExistence type="inferred from homology"/>
<feature type="chain" id="PRO_1000079855" description="Large ribosomal subunit protein bL28">
    <location>
        <begin position="1"/>
        <end position="78"/>
    </location>
</feature>
<comment type="similarity">
    <text evidence="1">Belongs to the bacterial ribosomal protein bL28 family.</text>
</comment>
<accession>B0JLJ8</accession>
<name>RL28_MICAN</name>
<evidence type="ECO:0000255" key="1">
    <source>
        <dbReference type="HAMAP-Rule" id="MF_00373"/>
    </source>
</evidence>
<evidence type="ECO:0000305" key="2"/>
<protein>
    <recommendedName>
        <fullName evidence="1">Large ribosomal subunit protein bL28</fullName>
    </recommendedName>
    <alternativeName>
        <fullName evidence="2">50S ribosomal protein L28</fullName>
    </alternativeName>
</protein>